<name>KI59C_DROME</name>
<evidence type="ECO:0000255" key="1"/>
<evidence type="ECO:0000255" key="2">
    <source>
        <dbReference type="PROSITE-ProRule" id="PRU00283"/>
    </source>
</evidence>
<evidence type="ECO:0000256" key="3">
    <source>
        <dbReference type="SAM" id="MobiDB-lite"/>
    </source>
</evidence>
<evidence type="ECO:0000269" key="4">
    <source>
    </source>
</evidence>
<proteinExistence type="inferred from homology"/>
<accession>Q9W1U4</accession>
<comment type="function">
    <text evidence="4">Required during anaphase to drive sister chromatid separation to actively depolymerize kinetochore microtubules at their kinetochore-associated plus ends, thereby contributing to chromatid mobility through a 'Pac-man' mechanism.</text>
</comment>
<comment type="subcellular location">
    <subcellularLocation>
        <location evidence="4">Chromosome</location>
        <location evidence="4">Centromere</location>
    </subcellularLocation>
    <subcellularLocation>
        <location evidence="4">Chromosome</location>
        <location evidence="4">Centromere</location>
        <location evidence="4">Kinetochore</location>
    </subcellularLocation>
    <subcellularLocation>
        <location evidence="4">Cytoplasm</location>
        <location evidence="4">Cytoskeleton</location>
        <location evidence="4">Spindle pole</location>
    </subcellularLocation>
    <text>Primarily restricted to centromeric regions of chromosomes during both metaphase and anaphase. Not localized on spindle poles throughout mitosis. Concentrated on the plus ends of kinetochore microtubules embedded in the kinetochore.</text>
</comment>
<comment type="disruption phenotype">
    <text evidence="4">Defects in chromosome segregation, but does not affect the mitotic spindle.</text>
</comment>
<comment type="similarity">
    <text evidence="2">Belongs to the TRAFAC class myosin-kinesin ATPase superfamily. Kinesin family. MCAK/KIF2 subfamily.</text>
</comment>
<feature type="chain" id="PRO_0000125425" description="Kinesin-like protein Klp59C">
    <location>
        <begin position="1"/>
        <end position="626"/>
    </location>
</feature>
<feature type="domain" description="Kinesin motor" evidence="2">
    <location>
        <begin position="187"/>
        <end position="521"/>
    </location>
</feature>
<feature type="region of interest" description="Globular" evidence="1">
    <location>
        <begin position="1"/>
        <end position="183"/>
    </location>
</feature>
<feature type="region of interest" description="Disordered" evidence="3">
    <location>
        <begin position="68"/>
        <end position="155"/>
    </location>
</feature>
<feature type="region of interest" description="Disordered" evidence="3">
    <location>
        <begin position="557"/>
        <end position="608"/>
    </location>
</feature>
<feature type="coiled-coil region" evidence="1">
    <location>
        <begin position="115"/>
        <end position="150"/>
    </location>
</feature>
<feature type="compositionally biased region" description="Polar residues" evidence="3">
    <location>
        <begin position="72"/>
        <end position="96"/>
    </location>
</feature>
<feature type="compositionally biased region" description="Low complexity" evidence="3">
    <location>
        <begin position="101"/>
        <end position="112"/>
    </location>
</feature>
<feature type="compositionally biased region" description="Basic and acidic residues" evidence="3">
    <location>
        <begin position="113"/>
        <end position="150"/>
    </location>
</feature>
<feature type="binding site" evidence="2">
    <location>
        <begin position="277"/>
        <end position="284"/>
    </location>
    <ligand>
        <name>ATP</name>
        <dbReference type="ChEBI" id="CHEBI:30616"/>
    </ligand>
</feature>
<reference key="1">
    <citation type="journal article" date="2000" name="Science">
        <title>The genome sequence of Drosophila melanogaster.</title>
        <authorList>
            <person name="Adams M.D."/>
            <person name="Celniker S.E."/>
            <person name="Holt R.A."/>
            <person name="Evans C.A."/>
            <person name="Gocayne J.D."/>
            <person name="Amanatides P.G."/>
            <person name="Scherer S.E."/>
            <person name="Li P.W."/>
            <person name="Hoskins R.A."/>
            <person name="Galle R.F."/>
            <person name="George R.A."/>
            <person name="Lewis S.E."/>
            <person name="Richards S."/>
            <person name="Ashburner M."/>
            <person name="Henderson S.N."/>
            <person name="Sutton G.G."/>
            <person name="Wortman J.R."/>
            <person name="Yandell M.D."/>
            <person name="Zhang Q."/>
            <person name="Chen L.X."/>
            <person name="Brandon R.C."/>
            <person name="Rogers Y.-H.C."/>
            <person name="Blazej R.G."/>
            <person name="Champe M."/>
            <person name="Pfeiffer B.D."/>
            <person name="Wan K.H."/>
            <person name="Doyle C."/>
            <person name="Baxter E.G."/>
            <person name="Helt G."/>
            <person name="Nelson C.R."/>
            <person name="Miklos G.L.G."/>
            <person name="Abril J.F."/>
            <person name="Agbayani A."/>
            <person name="An H.-J."/>
            <person name="Andrews-Pfannkoch C."/>
            <person name="Baldwin D."/>
            <person name="Ballew R.M."/>
            <person name="Basu A."/>
            <person name="Baxendale J."/>
            <person name="Bayraktaroglu L."/>
            <person name="Beasley E.M."/>
            <person name="Beeson K.Y."/>
            <person name="Benos P.V."/>
            <person name="Berman B.P."/>
            <person name="Bhandari D."/>
            <person name="Bolshakov S."/>
            <person name="Borkova D."/>
            <person name="Botchan M.R."/>
            <person name="Bouck J."/>
            <person name="Brokstein P."/>
            <person name="Brottier P."/>
            <person name="Burtis K.C."/>
            <person name="Busam D.A."/>
            <person name="Butler H."/>
            <person name="Cadieu E."/>
            <person name="Center A."/>
            <person name="Chandra I."/>
            <person name="Cherry J.M."/>
            <person name="Cawley S."/>
            <person name="Dahlke C."/>
            <person name="Davenport L.B."/>
            <person name="Davies P."/>
            <person name="de Pablos B."/>
            <person name="Delcher A."/>
            <person name="Deng Z."/>
            <person name="Mays A.D."/>
            <person name="Dew I."/>
            <person name="Dietz S.M."/>
            <person name="Dodson K."/>
            <person name="Doup L.E."/>
            <person name="Downes M."/>
            <person name="Dugan-Rocha S."/>
            <person name="Dunkov B.C."/>
            <person name="Dunn P."/>
            <person name="Durbin K.J."/>
            <person name="Evangelista C.C."/>
            <person name="Ferraz C."/>
            <person name="Ferriera S."/>
            <person name="Fleischmann W."/>
            <person name="Fosler C."/>
            <person name="Gabrielian A.E."/>
            <person name="Garg N.S."/>
            <person name="Gelbart W.M."/>
            <person name="Glasser K."/>
            <person name="Glodek A."/>
            <person name="Gong F."/>
            <person name="Gorrell J.H."/>
            <person name="Gu Z."/>
            <person name="Guan P."/>
            <person name="Harris M."/>
            <person name="Harris N.L."/>
            <person name="Harvey D.A."/>
            <person name="Heiman T.J."/>
            <person name="Hernandez J.R."/>
            <person name="Houck J."/>
            <person name="Hostin D."/>
            <person name="Houston K.A."/>
            <person name="Howland T.J."/>
            <person name="Wei M.-H."/>
            <person name="Ibegwam C."/>
            <person name="Jalali M."/>
            <person name="Kalush F."/>
            <person name="Karpen G.H."/>
            <person name="Ke Z."/>
            <person name="Kennison J.A."/>
            <person name="Ketchum K.A."/>
            <person name="Kimmel B.E."/>
            <person name="Kodira C.D."/>
            <person name="Kraft C.L."/>
            <person name="Kravitz S."/>
            <person name="Kulp D."/>
            <person name="Lai Z."/>
            <person name="Lasko P."/>
            <person name="Lei Y."/>
            <person name="Levitsky A.A."/>
            <person name="Li J.H."/>
            <person name="Li Z."/>
            <person name="Liang Y."/>
            <person name="Lin X."/>
            <person name="Liu X."/>
            <person name="Mattei B."/>
            <person name="McIntosh T.C."/>
            <person name="McLeod M.P."/>
            <person name="McPherson D."/>
            <person name="Merkulov G."/>
            <person name="Milshina N.V."/>
            <person name="Mobarry C."/>
            <person name="Morris J."/>
            <person name="Moshrefi A."/>
            <person name="Mount S.M."/>
            <person name="Moy M."/>
            <person name="Murphy B."/>
            <person name="Murphy L."/>
            <person name="Muzny D.M."/>
            <person name="Nelson D.L."/>
            <person name="Nelson D.R."/>
            <person name="Nelson K.A."/>
            <person name="Nixon K."/>
            <person name="Nusskern D.R."/>
            <person name="Pacleb J.M."/>
            <person name="Palazzolo M."/>
            <person name="Pittman G.S."/>
            <person name="Pan S."/>
            <person name="Pollard J."/>
            <person name="Puri V."/>
            <person name="Reese M.G."/>
            <person name="Reinert K."/>
            <person name="Remington K."/>
            <person name="Saunders R.D.C."/>
            <person name="Scheeler F."/>
            <person name="Shen H."/>
            <person name="Shue B.C."/>
            <person name="Siden-Kiamos I."/>
            <person name="Simpson M."/>
            <person name="Skupski M.P."/>
            <person name="Smith T.J."/>
            <person name="Spier E."/>
            <person name="Spradling A.C."/>
            <person name="Stapleton M."/>
            <person name="Strong R."/>
            <person name="Sun E."/>
            <person name="Svirskas R."/>
            <person name="Tector C."/>
            <person name="Turner R."/>
            <person name="Venter E."/>
            <person name="Wang A.H."/>
            <person name="Wang X."/>
            <person name="Wang Z.-Y."/>
            <person name="Wassarman D.A."/>
            <person name="Weinstock G.M."/>
            <person name="Weissenbach J."/>
            <person name="Williams S.M."/>
            <person name="Woodage T."/>
            <person name="Worley K.C."/>
            <person name="Wu D."/>
            <person name="Yang S."/>
            <person name="Yao Q.A."/>
            <person name="Ye J."/>
            <person name="Yeh R.-F."/>
            <person name="Zaveri J.S."/>
            <person name="Zhan M."/>
            <person name="Zhang G."/>
            <person name="Zhao Q."/>
            <person name="Zheng L."/>
            <person name="Zheng X.H."/>
            <person name="Zhong F.N."/>
            <person name="Zhong W."/>
            <person name="Zhou X."/>
            <person name="Zhu S.C."/>
            <person name="Zhu X."/>
            <person name="Smith H.O."/>
            <person name="Gibbs R.A."/>
            <person name="Myers E.W."/>
            <person name="Rubin G.M."/>
            <person name="Venter J.C."/>
        </authorList>
    </citation>
    <scope>NUCLEOTIDE SEQUENCE [LARGE SCALE GENOMIC DNA]</scope>
    <source>
        <strain>Berkeley</strain>
    </source>
</reference>
<reference key="2">
    <citation type="journal article" date="2002" name="Genome Biol.">
        <title>Annotation of the Drosophila melanogaster euchromatic genome: a systematic review.</title>
        <authorList>
            <person name="Misra S."/>
            <person name="Crosby M.A."/>
            <person name="Mungall C.J."/>
            <person name="Matthews B.B."/>
            <person name="Campbell K.S."/>
            <person name="Hradecky P."/>
            <person name="Huang Y."/>
            <person name="Kaminker J.S."/>
            <person name="Millburn G.H."/>
            <person name="Prochnik S.E."/>
            <person name="Smith C.D."/>
            <person name="Tupy J.L."/>
            <person name="Whitfield E.J."/>
            <person name="Bayraktaroglu L."/>
            <person name="Berman B.P."/>
            <person name="Bettencourt B.R."/>
            <person name="Celniker S.E."/>
            <person name="de Grey A.D.N.J."/>
            <person name="Drysdale R.A."/>
            <person name="Harris N.L."/>
            <person name="Richter J."/>
            <person name="Russo S."/>
            <person name="Schroeder A.J."/>
            <person name="Shu S.Q."/>
            <person name="Stapleton M."/>
            <person name="Yamada C."/>
            <person name="Ashburner M."/>
            <person name="Gelbart W.M."/>
            <person name="Rubin G.M."/>
            <person name="Lewis S.E."/>
        </authorList>
    </citation>
    <scope>GENOME REANNOTATION</scope>
    <source>
        <strain>Berkeley</strain>
    </source>
</reference>
<reference key="3">
    <citation type="journal article" date="2004" name="Nature">
        <title>Two mitotic kinesins cooperate to drive sister chromatid separation during anaphase.</title>
        <authorList>
            <person name="Rogers G.C."/>
            <person name="Rogers S.L."/>
            <person name="Schwimmer T.A."/>
            <person name="Ems-McClung S.C."/>
            <person name="Walczak C.E."/>
            <person name="Vale R.D."/>
            <person name="Scholey J.M."/>
            <person name="Sharp D.J."/>
        </authorList>
    </citation>
    <scope>FUNCTION</scope>
    <scope>SUBCELLULAR LOCATION</scope>
    <scope>DISRUPTION PHENOTYPE</scope>
</reference>
<keyword id="KW-0067">ATP-binding</keyword>
<keyword id="KW-0131">Cell cycle</keyword>
<keyword id="KW-0132">Cell division</keyword>
<keyword id="KW-0137">Centromere</keyword>
<keyword id="KW-0158">Chromosome</keyword>
<keyword id="KW-0159">Chromosome partition</keyword>
<keyword id="KW-0175">Coiled coil</keyword>
<keyword id="KW-0963">Cytoplasm</keyword>
<keyword id="KW-0206">Cytoskeleton</keyword>
<keyword id="KW-0995">Kinetochore</keyword>
<keyword id="KW-0493">Microtubule</keyword>
<keyword id="KW-0498">Mitosis</keyword>
<keyword id="KW-0505">Motor protein</keyword>
<keyword id="KW-0547">Nucleotide-binding</keyword>
<keyword id="KW-1185">Reference proteome</keyword>
<gene>
    <name type="primary">Klp59C</name>
    <name type="ORF">CG3219</name>
</gene>
<protein>
    <recommendedName>
        <fullName>Kinesin-like protein Klp59C</fullName>
    </recommendedName>
    <alternativeName>
        <fullName>Kinesin-like protein at cytological position 59C</fullName>
    </alternativeName>
</protein>
<sequence length="626" mass="70053">MDKLSIEQKIFIRRSDGRVHLAEIIKLEGGDSKLITVEWPEGHTVRGKELPLELVVLMNPHIFDSPRCSGGNAASANQTASISPRSMKQRIATGSLSPVLATAPPRQQTAPPVREDEVVHQAERMRKERERRREAQARTRLDREQGKNEDPGNPNWEVARMIRLQREQMESQRVRSGTTNERINCHQIMVCVRKRPLRRKELADREQDVVSIPSKHTLVVHEPRKHVNLVKFLENHSFRFDYVFDEECSNATVYEFTARPLIKHIFDGGMATCFAYGQTGSGKTYTMGGQFPGRHQSSMDGIYAMAAKDVFSTLKTVPYNKLNLKVYCSFFEIYGTRVFDLLMPGKPQLRVLEDRNQQVQVVGLTQNPVQNTAEVLDLLELGNSVRTSGHTSANSKSSRSHAVFQIVLRSAAGEKLHGKFSLIDLAGNERGADNSSADRQTRLEGSEINKSLLVLKECIRALGRQSSHLPFRGSKLTQVLRDSFIGGKKVKTCMIAMISPCLHSVEHTLNTLRYADRVKELSVESIPSKRMPDANLGSTSMSDIVCQSSTQRLFPCASSTSMPGGGNQAQQHTNTANDLNRSQKPTSKPTYPTSGQQLVQRKGSSQREASMMLTKSLAQFRGRNFP</sequence>
<dbReference type="EMBL" id="AE013599">
    <property type="protein sequence ID" value="AAF46959.1"/>
    <property type="molecule type" value="Genomic_DNA"/>
</dbReference>
<dbReference type="RefSeq" id="NP_611759.1">
    <property type="nucleotide sequence ID" value="NM_137915.4"/>
</dbReference>
<dbReference type="SMR" id="Q9W1U4"/>
<dbReference type="BioGRID" id="63275">
    <property type="interactions" value="2"/>
</dbReference>
<dbReference type="FunCoup" id="Q9W1U4">
    <property type="interactions" value="34"/>
</dbReference>
<dbReference type="IntAct" id="Q9W1U4">
    <property type="interactions" value="4"/>
</dbReference>
<dbReference type="STRING" id="7227.FBpp0071885"/>
<dbReference type="PaxDb" id="7227-FBpp0071885"/>
<dbReference type="DNASU" id="37671"/>
<dbReference type="EnsemblMetazoa" id="FBtr0071975">
    <property type="protein sequence ID" value="FBpp0071885"/>
    <property type="gene ID" value="FBgn0034824"/>
</dbReference>
<dbReference type="GeneID" id="37671"/>
<dbReference type="KEGG" id="dme:Dmel_CG3219"/>
<dbReference type="UCSC" id="CG3219-RA">
    <property type="organism name" value="d. melanogaster"/>
</dbReference>
<dbReference type="AGR" id="FB:FBgn0034824"/>
<dbReference type="CTD" id="37671"/>
<dbReference type="FlyBase" id="FBgn0034824">
    <property type="gene designation" value="Klp59C"/>
</dbReference>
<dbReference type="VEuPathDB" id="VectorBase:FBgn0034824"/>
<dbReference type="eggNOG" id="KOG0246">
    <property type="taxonomic scope" value="Eukaryota"/>
</dbReference>
<dbReference type="GeneTree" id="ENSGT00940000154046"/>
<dbReference type="HOGENOM" id="CLU_001485_19_1_1"/>
<dbReference type="InParanoid" id="Q9W1U4"/>
<dbReference type="OMA" id="NWDTARM"/>
<dbReference type="OrthoDB" id="3176171at2759"/>
<dbReference type="PhylomeDB" id="Q9W1U4"/>
<dbReference type="Reactome" id="R-DME-6811434">
    <property type="pathway name" value="COPI-dependent Golgi-to-ER retrograde traffic"/>
</dbReference>
<dbReference type="Reactome" id="R-DME-983189">
    <property type="pathway name" value="Kinesins"/>
</dbReference>
<dbReference type="BioGRID-ORCS" id="37671">
    <property type="hits" value="0 hits in 3 CRISPR screens"/>
</dbReference>
<dbReference type="GenomeRNAi" id="37671"/>
<dbReference type="PRO" id="PR:Q9W1U4"/>
<dbReference type="Proteomes" id="UP000000803">
    <property type="component" value="Chromosome 2R"/>
</dbReference>
<dbReference type="Bgee" id="FBgn0034824">
    <property type="expression patterns" value="Expressed in early elongation stage spermatid (Drosophila) in testis and 22 other cell types or tissues"/>
</dbReference>
<dbReference type="ExpressionAtlas" id="Q9W1U4">
    <property type="expression patterns" value="baseline and differential"/>
</dbReference>
<dbReference type="GO" id="GO:0005813">
    <property type="term" value="C:centrosome"/>
    <property type="evidence" value="ECO:0000318"/>
    <property type="project" value="GO_Central"/>
</dbReference>
<dbReference type="GO" id="GO:0005737">
    <property type="term" value="C:cytoplasm"/>
    <property type="evidence" value="ECO:0000318"/>
    <property type="project" value="GO_Central"/>
</dbReference>
<dbReference type="GO" id="GO:0005871">
    <property type="term" value="C:kinesin complex"/>
    <property type="evidence" value="ECO:0000318"/>
    <property type="project" value="GO_Central"/>
</dbReference>
<dbReference type="GO" id="GO:0000776">
    <property type="term" value="C:kinetochore"/>
    <property type="evidence" value="ECO:0007669"/>
    <property type="project" value="UniProtKB-KW"/>
</dbReference>
<dbReference type="GO" id="GO:0005828">
    <property type="term" value="C:kinetochore microtubule"/>
    <property type="evidence" value="ECO:0000314"/>
    <property type="project" value="UniProtKB"/>
</dbReference>
<dbReference type="GO" id="GO:0005874">
    <property type="term" value="C:microtubule"/>
    <property type="evidence" value="ECO:0000318"/>
    <property type="project" value="GO_Central"/>
</dbReference>
<dbReference type="GO" id="GO:0005819">
    <property type="term" value="C:spindle"/>
    <property type="evidence" value="ECO:0000318"/>
    <property type="project" value="GO_Central"/>
</dbReference>
<dbReference type="GO" id="GO:0000922">
    <property type="term" value="C:spindle pole"/>
    <property type="evidence" value="ECO:0007669"/>
    <property type="project" value="UniProtKB-SubCell"/>
</dbReference>
<dbReference type="GO" id="GO:0005524">
    <property type="term" value="F:ATP binding"/>
    <property type="evidence" value="ECO:0007669"/>
    <property type="project" value="UniProtKB-KW"/>
</dbReference>
<dbReference type="GO" id="GO:0016887">
    <property type="term" value="F:ATP hydrolysis activity"/>
    <property type="evidence" value="ECO:0000318"/>
    <property type="project" value="GO_Central"/>
</dbReference>
<dbReference type="GO" id="GO:0003774">
    <property type="term" value="F:cytoskeletal motor activity"/>
    <property type="evidence" value="ECO:0000314"/>
    <property type="project" value="UniProtKB"/>
</dbReference>
<dbReference type="GO" id="GO:0008017">
    <property type="term" value="F:microtubule binding"/>
    <property type="evidence" value="ECO:0000318"/>
    <property type="project" value="GO_Central"/>
</dbReference>
<dbReference type="GO" id="GO:0003777">
    <property type="term" value="F:microtubule motor activity"/>
    <property type="evidence" value="ECO:0000318"/>
    <property type="project" value="GO_Central"/>
</dbReference>
<dbReference type="GO" id="GO:0051301">
    <property type="term" value="P:cell division"/>
    <property type="evidence" value="ECO:0007669"/>
    <property type="project" value="UniProtKB-KW"/>
</dbReference>
<dbReference type="GO" id="GO:0007059">
    <property type="term" value="P:chromosome segregation"/>
    <property type="evidence" value="ECO:0007669"/>
    <property type="project" value="UniProtKB-KW"/>
</dbReference>
<dbReference type="GO" id="GO:0007018">
    <property type="term" value="P:microtubule-based movement"/>
    <property type="evidence" value="ECO:0000318"/>
    <property type="project" value="GO_Central"/>
</dbReference>
<dbReference type="CDD" id="cd01367">
    <property type="entry name" value="KISc_KIF2_like"/>
    <property type="match status" value="1"/>
</dbReference>
<dbReference type="FunFam" id="3.40.850.10:FF:000012">
    <property type="entry name" value="Kinesin-like protein"/>
    <property type="match status" value="1"/>
</dbReference>
<dbReference type="Gene3D" id="3.40.850.10">
    <property type="entry name" value="Kinesin motor domain"/>
    <property type="match status" value="1"/>
</dbReference>
<dbReference type="InterPro" id="IPR054473">
    <property type="entry name" value="KIF2A-like_N"/>
</dbReference>
<dbReference type="InterPro" id="IPR027640">
    <property type="entry name" value="Kinesin-like_fam"/>
</dbReference>
<dbReference type="InterPro" id="IPR019821">
    <property type="entry name" value="Kinesin_motor_CS"/>
</dbReference>
<dbReference type="InterPro" id="IPR001752">
    <property type="entry name" value="Kinesin_motor_dom"/>
</dbReference>
<dbReference type="InterPro" id="IPR036961">
    <property type="entry name" value="Kinesin_motor_dom_sf"/>
</dbReference>
<dbReference type="InterPro" id="IPR027417">
    <property type="entry name" value="P-loop_NTPase"/>
</dbReference>
<dbReference type="PANTHER" id="PTHR47971:SF8">
    <property type="entry name" value="KINESIN-LIKE PROTEIN"/>
    <property type="match status" value="1"/>
</dbReference>
<dbReference type="PANTHER" id="PTHR47971">
    <property type="entry name" value="KINESIN-RELATED PROTEIN 6"/>
    <property type="match status" value="1"/>
</dbReference>
<dbReference type="Pfam" id="PF22923">
    <property type="entry name" value="KIF2A-like_1st"/>
    <property type="match status" value="1"/>
</dbReference>
<dbReference type="Pfam" id="PF00225">
    <property type="entry name" value="Kinesin"/>
    <property type="match status" value="1"/>
</dbReference>
<dbReference type="PRINTS" id="PR00380">
    <property type="entry name" value="KINESINHEAVY"/>
</dbReference>
<dbReference type="SMART" id="SM00129">
    <property type="entry name" value="KISc"/>
    <property type="match status" value="1"/>
</dbReference>
<dbReference type="SUPFAM" id="SSF52540">
    <property type="entry name" value="P-loop containing nucleoside triphosphate hydrolases"/>
    <property type="match status" value="1"/>
</dbReference>
<dbReference type="PROSITE" id="PS00411">
    <property type="entry name" value="KINESIN_MOTOR_1"/>
    <property type="match status" value="1"/>
</dbReference>
<dbReference type="PROSITE" id="PS50067">
    <property type="entry name" value="KINESIN_MOTOR_2"/>
    <property type="match status" value="1"/>
</dbReference>
<organism>
    <name type="scientific">Drosophila melanogaster</name>
    <name type="common">Fruit fly</name>
    <dbReference type="NCBI Taxonomy" id="7227"/>
    <lineage>
        <taxon>Eukaryota</taxon>
        <taxon>Metazoa</taxon>
        <taxon>Ecdysozoa</taxon>
        <taxon>Arthropoda</taxon>
        <taxon>Hexapoda</taxon>
        <taxon>Insecta</taxon>
        <taxon>Pterygota</taxon>
        <taxon>Neoptera</taxon>
        <taxon>Endopterygota</taxon>
        <taxon>Diptera</taxon>
        <taxon>Brachycera</taxon>
        <taxon>Muscomorpha</taxon>
        <taxon>Ephydroidea</taxon>
        <taxon>Drosophilidae</taxon>
        <taxon>Drosophila</taxon>
        <taxon>Sophophora</taxon>
    </lineage>
</organism>